<name>RAA5E_ARATH</name>
<organism>
    <name type="scientific">Arabidopsis thaliana</name>
    <name type="common">Mouse-ear cress</name>
    <dbReference type="NCBI Taxonomy" id="3702"/>
    <lineage>
        <taxon>Eukaryota</taxon>
        <taxon>Viridiplantae</taxon>
        <taxon>Streptophyta</taxon>
        <taxon>Embryophyta</taxon>
        <taxon>Tracheophyta</taxon>
        <taxon>Spermatophyta</taxon>
        <taxon>Magnoliopsida</taxon>
        <taxon>eudicotyledons</taxon>
        <taxon>Gunneridae</taxon>
        <taxon>Pentapetalae</taxon>
        <taxon>rosids</taxon>
        <taxon>malvids</taxon>
        <taxon>Brassicales</taxon>
        <taxon>Brassicaceae</taxon>
        <taxon>Camelineae</taxon>
        <taxon>Arabidopsis</taxon>
    </lineage>
</organism>
<gene>
    <name type="primary">RABA5E</name>
    <name type="synonym">ARA</name>
    <name type="synonym">ARA-1</name>
    <name type="ordered locus">At1g05810</name>
    <name type="ORF">T20M3.8</name>
</gene>
<reference key="1">
    <citation type="journal article" date="1989" name="Gene">
        <title>Cloning of ara, a putative Arabidopsis thaliana gene homologous to the ras-related gene family.</title>
        <authorList>
            <person name="Matsui M."/>
            <person name="Sasamoto S."/>
            <person name="Kunieda T."/>
            <person name="Nomura N."/>
            <person name="Ishizaki R."/>
        </authorList>
    </citation>
    <scope>NUCLEOTIDE SEQUENCE [GENOMIC DNA]</scope>
</reference>
<reference key="2">
    <citation type="journal article" date="2000" name="Nature">
        <title>Sequence and analysis of chromosome 1 of the plant Arabidopsis thaliana.</title>
        <authorList>
            <person name="Theologis A."/>
            <person name="Ecker J.R."/>
            <person name="Palm C.J."/>
            <person name="Federspiel N.A."/>
            <person name="Kaul S."/>
            <person name="White O."/>
            <person name="Alonso J."/>
            <person name="Altafi H."/>
            <person name="Araujo R."/>
            <person name="Bowman C.L."/>
            <person name="Brooks S.Y."/>
            <person name="Buehler E."/>
            <person name="Chan A."/>
            <person name="Chao Q."/>
            <person name="Chen H."/>
            <person name="Cheuk R.F."/>
            <person name="Chin C.W."/>
            <person name="Chung M.K."/>
            <person name="Conn L."/>
            <person name="Conway A.B."/>
            <person name="Conway A.R."/>
            <person name="Creasy T.H."/>
            <person name="Dewar K."/>
            <person name="Dunn P."/>
            <person name="Etgu P."/>
            <person name="Feldblyum T.V."/>
            <person name="Feng J.-D."/>
            <person name="Fong B."/>
            <person name="Fujii C.Y."/>
            <person name="Gill J.E."/>
            <person name="Goldsmith A.D."/>
            <person name="Haas B."/>
            <person name="Hansen N.F."/>
            <person name="Hughes B."/>
            <person name="Huizar L."/>
            <person name="Hunter J.L."/>
            <person name="Jenkins J."/>
            <person name="Johnson-Hopson C."/>
            <person name="Khan S."/>
            <person name="Khaykin E."/>
            <person name="Kim C.J."/>
            <person name="Koo H.L."/>
            <person name="Kremenetskaia I."/>
            <person name="Kurtz D.B."/>
            <person name="Kwan A."/>
            <person name="Lam B."/>
            <person name="Langin-Hooper S."/>
            <person name="Lee A."/>
            <person name="Lee J.M."/>
            <person name="Lenz C.A."/>
            <person name="Li J.H."/>
            <person name="Li Y.-P."/>
            <person name="Lin X."/>
            <person name="Liu S.X."/>
            <person name="Liu Z.A."/>
            <person name="Luros J.S."/>
            <person name="Maiti R."/>
            <person name="Marziali A."/>
            <person name="Militscher J."/>
            <person name="Miranda M."/>
            <person name="Nguyen M."/>
            <person name="Nierman W.C."/>
            <person name="Osborne B.I."/>
            <person name="Pai G."/>
            <person name="Peterson J."/>
            <person name="Pham P.K."/>
            <person name="Rizzo M."/>
            <person name="Rooney T."/>
            <person name="Rowley D."/>
            <person name="Sakano H."/>
            <person name="Salzberg S.L."/>
            <person name="Schwartz J.R."/>
            <person name="Shinn P."/>
            <person name="Southwick A.M."/>
            <person name="Sun H."/>
            <person name="Tallon L.J."/>
            <person name="Tambunga G."/>
            <person name="Toriumi M.J."/>
            <person name="Town C.D."/>
            <person name="Utterback T."/>
            <person name="Van Aken S."/>
            <person name="Vaysberg M."/>
            <person name="Vysotskaia V.S."/>
            <person name="Walker M."/>
            <person name="Wu D."/>
            <person name="Yu G."/>
            <person name="Fraser C.M."/>
            <person name="Venter J.C."/>
            <person name="Davis R.W."/>
        </authorList>
    </citation>
    <scope>NUCLEOTIDE SEQUENCE [LARGE SCALE GENOMIC DNA]</scope>
    <source>
        <strain>cv. Columbia</strain>
    </source>
</reference>
<reference key="3">
    <citation type="journal article" date="2017" name="Plant J.">
        <title>Araport11: a complete reannotation of the Arabidopsis thaliana reference genome.</title>
        <authorList>
            <person name="Cheng C.Y."/>
            <person name="Krishnakumar V."/>
            <person name="Chan A.P."/>
            <person name="Thibaud-Nissen F."/>
            <person name="Schobel S."/>
            <person name="Town C.D."/>
        </authorList>
    </citation>
    <scope>GENOME REANNOTATION</scope>
    <source>
        <strain>cv. Columbia</strain>
    </source>
</reference>
<reference key="4">
    <citation type="journal article" date="2003" name="Science">
        <title>Empirical analysis of transcriptional activity in the Arabidopsis genome.</title>
        <authorList>
            <person name="Yamada K."/>
            <person name="Lim J."/>
            <person name="Dale J.M."/>
            <person name="Chen H."/>
            <person name="Shinn P."/>
            <person name="Palm C.J."/>
            <person name="Southwick A.M."/>
            <person name="Wu H.C."/>
            <person name="Kim C.J."/>
            <person name="Nguyen M."/>
            <person name="Pham P.K."/>
            <person name="Cheuk R.F."/>
            <person name="Karlin-Newmann G."/>
            <person name="Liu S.X."/>
            <person name="Lam B."/>
            <person name="Sakano H."/>
            <person name="Wu T."/>
            <person name="Yu G."/>
            <person name="Miranda M."/>
            <person name="Quach H.L."/>
            <person name="Tripp M."/>
            <person name="Chang C.H."/>
            <person name="Lee J.M."/>
            <person name="Toriumi M.J."/>
            <person name="Chan M.M."/>
            <person name="Tang C.C."/>
            <person name="Onodera C.S."/>
            <person name="Deng J.M."/>
            <person name="Akiyama K."/>
            <person name="Ansari Y."/>
            <person name="Arakawa T."/>
            <person name="Banh J."/>
            <person name="Banno F."/>
            <person name="Bowser L."/>
            <person name="Brooks S.Y."/>
            <person name="Carninci P."/>
            <person name="Chao Q."/>
            <person name="Choy N."/>
            <person name="Enju A."/>
            <person name="Goldsmith A.D."/>
            <person name="Gurjal M."/>
            <person name="Hansen N.F."/>
            <person name="Hayashizaki Y."/>
            <person name="Johnson-Hopson C."/>
            <person name="Hsuan V.W."/>
            <person name="Iida K."/>
            <person name="Karnes M."/>
            <person name="Khan S."/>
            <person name="Koesema E."/>
            <person name="Ishida J."/>
            <person name="Jiang P.X."/>
            <person name="Jones T."/>
            <person name="Kawai J."/>
            <person name="Kamiya A."/>
            <person name="Meyers C."/>
            <person name="Nakajima M."/>
            <person name="Narusaka M."/>
            <person name="Seki M."/>
            <person name="Sakurai T."/>
            <person name="Satou M."/>
            <person name="Tamse R."/>
            <person name="Vaysberg M."/>
            <person name="Wallender E.K."/>
            <person name="Wong C."/>
            <person name="Yamamura Y."/>
            <person name="Yuan S."/>
            <person name="Shinozaki K."/>
            <person name="Davis R.W."/>
            <person name="Theologis A."/>
            <person name="Ecker J.R."/>
        </authorList>
    </citation>
    <scope>NUCLEOTIDE SEQUENCE [LARGE SCALE MRNA]</scope>
    <source>
        <strain>cv. Columbia</strain>
    </source>
</reference>
<reference key="5">
    <citation type="journal article" date="2003" name="Plant Physiol.">
        <title>Analysis of the small GTPase gene superfamily of Arabidopsis.</title>
        <authorList>
            <person name="Vernoud V."/>
            <person name="Horton A.C."/>
            <person name="Yang Z."/>
            <person name="Nielsen E."/>
        </authorList>
    </citation>
    <scope>GENE FAMILY</scope>
    <scope>NOMENCLATURE</scope>
</reference>
<dbReference type="EMBL" id="M25471">
    <property type="protein sequence ID" value="AAC13655.1"/>
    <property type="molecule type" value="Genomic_DNA"/>
</dbReference>
<dbReference type="EMBL" id="AC009999">
    <property type="protein sequence ID" value="AAF29387.1"/>
    <property type="molecule type" value="Genomic_DNA"/>
</dbReference>
<dbReference type="EMBL" id="CP002684">
    <property type="protein sequence ID" value="AEE27897.2"/>
    <property type="molecule type" value="Genomic_DNA"/>
</dbReference>
<dbReference type="EMBL" id="AF332457">
    <property type="protein sequence ID" value="AAG48820.1"/>
    <property type="molecule type" value="mRNA"/>
</dbReference>
<dbReference type="EMBL" id="AY063847">
    <property type="protein sequence ID" value="AAL36203.1"/>
    <property type="molecule type" value="mRNA"/>
</dbReference>
<dbReference type="EMBL" id="BT006190">
    <property type="protein sequence ID" value="AAP06819.1"/>
    <property type="status" value="ALT_INIT"/>
    <property type="molecule type" value="mRNA"/>
</dbReference>
<dbReference type="PIR" id="JS0163">
    <property type="entry name" value="JS0163"/>
</dbReference>
<dbReference type="RefSeq" id="NP_001318930.1">
    <property type="nucleotide sequence ID" value="NM_001331584.1"/>
</dbReference>
<dbReference type="SMR" id="P19892"/>
<dbReference type="FunCoup" id="P19892">
    <property type="interactions" value="119"/>
</dbReference>
<dbReference type="STRING" id="3702.P19892"/>
<dbReference type="iPTMnet" id="P19892"/>
<dbReference type="PaxDb" id="3702-AT1G05810.1"/>
<dbReference type="ProteomicsDB" id="236484"/>
<dbReference type="EnsemblPlants" id="AT1G05810.1">
    <property type="protein sequence ID" value="AT1G05810.1"/>
    <property type="gene ID" value="AT1G05810"/>
</dbReference>
<dbReference type="GeneID" id="837091"/>
<dbReference type="Gramene" id="AT1G05810.1">
    <property type="protein sequence ID" value="AT1G05810.1"/>
    <property type="gene ID" value="AT1G05810"/>
</dbReference>
<dbReference type="KEGG" id="ath:AT1G05810"/>
<dbReference type="Araport" id="AT1G05810"/>
<dbReference type="TAIR" id="AT1G05810">
    <property type="gene designation" value="RABA5E"/>
</dbReference>
<dbReference type="eggNOG" id="KOG0087">
    <property type="taxonomic scope" value="Eukaryota"/>
</dbReference>
<dbReference type="HOGENOM" id="CLU_041217_23_0_1"/>
<dbReference type="InParanoid" id="P19892"/>
<dbReference type="OMA" id="ERGAMTM"/>
<dbReference type="OrthoDB" id="1119373at2759"/>
<dbReference type="PhylomeDB" id="P19892"/>
<dbReference type="PRO" id="PR:P19892"/>
<dbReference type="Proteomes" id="UP000006548">
    <property type="component" value="Chromosome 1"/>
</dbReference>
<dbReference type="ExpressionAtlas" id="P19892">
    <property type="expression patterns" value="baseline and differential"/>
</dbReference>
<dbReference type="GO" id="GO:0005886">
    <property type="term" value="C:plasma membrane"/>
    <property type="evidence" value="ECO:0007669"/>
    <property type="project" value="UniProtKB-SubCell"/>
</dbReference>
<dbReference type="GO" id="GO:0005525">
    <property type="term" value="F:GTP binding"/>
    <property type="evidence" value="ECO:0007669"/>
    <property type="project" value="UniProtKB-KW"/>
</dbReference>
<dbReference type="GO" id="GO:0003924">
    <property type="term" value="F:GTPase activity"/>
    <property type="evidence" value="ECO:0007669"/>
    <property type="project" value="InterPro"/>
</dbReference>
<dbReference type="GO" id="GO:0015031">
    <property type="term" value="P:protein transport"/>
    <property type="evidence" value="ECO:0007669"/>
    <property type="project" value="UniProtKB-KW"/>
</dbReference>
<dbReference type="CDD" id="cd01868">
    <property type="entry name" value="Rab11_like"/>
    <property type="match status" value="1"/>
</dbReference>
<dbReference type="FunFam" id="3.40.50.300:FF:000274">
    <property type="entry name" value="ras-related protein RABA5a"/>
    <property type="match status" value="1"/>
</dbReference>
<dbReference type="Gene3D" id="3.40.50.300">
    <property type="entry name" value="P-loop containing nucleotide triphosphate hydrolases"/>
    <property type="match status" value="1"/>
</dbReference>
<dbReference type="InterPro" id="IPR027417">
    <property type="entry name" value="P-loop_NTPase"/>
</dbReference>
<dbReference type="InterPro" id="IPR050209">
    <property type="entry name" value="Rab_GTPases_membrane_traffic"/>
</dbReference>
<dbReference type="InterPro" id="IPR005225">
    <property type="entry name" value="Small_GTP-bd"/>
</dbReference>
<dbReference type="InterPro" id="IPR001806">
    <property type="entry name" value="Small_GTPase"/>
</dbReference>
<dbReference type="NCBIfam" id="TIGR00231">
    <property type="entry name" value="small_GTP"/>
    <property type="match status" value="1"/>
</dbReference>
<dbReference type="PANTHER" id="PTHR47979">
    <property type="entry name" value="DRAB11-RELATED"/>
    <property type="match status" value="1"/>
</dbReference>
<dbReference type="Pfam" id="PF00071">
    <property type="entry name" value="Ras"/>
    <property type="match status" value="1"/>
</dbReference>
<dbReference type="PRINTS" id="PR00449">
    <property type="entry name" value="RASTRNSFRMNG"/>
</dbReference>
<dbReference type="SMART" id="SM00175">
    <property type="entry name" value="RAB"/>
    <property type="match status" value="1"/>
</dbReference>
<dbReference type="SMART" id="SM00176">
    <property type="entry name" value="RAN"/>
    <property type="match status" value="1"/>
</dbReference>
<dbReference type="SMART" id="SM00173">
    <property type="entry name" value="RAS"/>
    <property type="match status" value="1"/>
</dbReference>
<dbReference type="SMART" id="SM00174">
    <property type="entry name" value="RHO"/>
    <property type="match status" value="1"/>
</dbReference>
<dbReference type="SUPFAM" id="SSF52540">
    <property type="entry name" value="P-loop containing nucleoside triphosphate hydrolases"/>
    <property type="match status" value="1"/>
</dbReference>
<dbReference type="PROSITE" id="PS51419">
    <property type="entry name" value="RAB"/>
    <property type="match status" value="1"/>
</dbReference>
<accession>P19892</accession>
<accession>F4IAC9</accession>
<accession>Q84QC3</accession>
<accession>Q8VZT7</accession>
<protein>
    <recommendedName>
        <fullName>Ras-related protein RABA5e</fullName>
        <shortName>AtRABA5e</shortName>
    </recommendedName>
    <alternativeName>
        <fullName>Ras-related protein Ara-1</fullName>
    </alternativeName>
</protein>
<proteinExistence type="evidence at transcript level"/>
<sequence length="218" mass="24210">MSSDDEGREEYLFKIVVIGDSAVGKSNLLSRYARNEFSANSKATIGVEFQTQSMEIEGKEVKAQIWDTAGQERFRAVTSAYYRGAVGALVVYDITRRTTFESVGRWLDELKIHSDTTVARMLVGNKCDLENIRAVSVEEGKALAEEEGLFFVETSALDSTNVKTAFEMVILDIYNNVSRKQLNSDTYKDELTVNRVSLVKDDNSASKQSSGFSCCSST</sequence>
<feature type="chain" id="PRO_0000121288" description="Ras-related protein RABA5e">
    <location>
        <begin position="1"/>
        <end position="215"/>
    </location>
</feature>
<feature type="propeptide" id="PRO_0000370774" description="Removed in mature form" evidence="2">
    <location>
        <begin position="216"/>
        <end position="218"/>
    </location>
</feature>
<feature type="short sequence motif" description="Effector region" evidence="1">
    <location>
        <begin position="41"/>
        <end position="49"/>
    </location>
</feature>
<feature type="binding site" evidence="1">
    <location>
        <begin position="19"/>
        <end position="26"/>
    </location>
    <ligand>
        <name>GTP</name>
        <dbReference type="ChEBI" id="CHEBI:37565"/>
    </ligand>
</feature>
<feature type="binding site" evidence="1">
    <location>
        <begin position="67"/>
        <end position="71"/>
    </location>
    <ligand>
        <name>GTP</name>
        <dbReference type="ChEBI" id="CHEBI:37565"/>
    </ligand>
</feature>
<feature type="binding site" evidence="1">
    <location>
        <begin position="125"/>
        <end position="128"/>
    </location>
    <ligand>
        <name>GTP</name>
        <dbReference type="ChEBI" id="CHEBI:37565"/>
    </ligand>
</feature>
<feature type="binding site" evidence="1">
    <location>
        <begin position="155"/>
        <end position="156"/>
    </location>
    <ligand>
        <name>GTP</name>
        <dbReference type="ChEBI" id="CHEBI:37565"/>
    </ligand>
</feature>
<feature type="modified residue" description="Cysteine methyl ester" evidence="2">
    <location>
        <position position="215"/>
    </location>
</feature>
<feature type="lipid moiety-binding region" description="S-geranylgeranyl cysteine" evidence="1">
    <location>
        <position position="214"/>
    </location>
</feature>
<feature type="lipid moiety-binding region" description="S-geranylgeranyl cysteine" evidence="1">
    <location>
        <position position="215"/>
    </location>
</feature>
<feature type="sequence conflict" description="In Ref. 4; AAL36203." evidence="3" ref="4">
    <original>E</original>
    <variation>Q</variation>
    <location>
        <position position="109"/>
    </location>
</feature>
<comment type="function">
    <text evidence="1">Intracellular vesicle trafficking and protein transport.</text>
</comment>
<comment type="subcellular location">
    <subcellularLocation>
        <location evidence="3">Cell membrane</location>
        <topology evidence="3">Lipid-anchor</topology>
        <orientation evidence="3">Cytoplasmic side</orientation>
    </subcellularLocation>
</comment>
<comment type="similarity">
    <text evidence="3">Belongs to the small GTPase superfamily. Rab family.</text>
</comment>
<comment type="sequence caution" evidence="3">
    <conflict type="erroneous initiation">
        <sequence resource="EMBL-CDS" id="AAP06819"/>
    </conflict>
    <text>Extended N-terminus.</text>
</comment>
<keyword id="KW-1003">Cell membrane</keyword>
<keyword id="KW-0342">GTP-binding</keyword>
<keyword id="KW-0449">Lipoprotein</keyword>
<keyword id="KW-0472">Membrane</keyword>
<keyword id="KW-0488">Methylation</keyword>
<keyword id="KW-0547">Nucleotide-binding</keyword>
<keyword id="KW-0636">Prenylation</keyword>
<keyword id="KW-0653">Protein transport</keyword>
<keyword id="KW-1185">Reference proteome</keyword>
<keyword id="KW-0813">Transport</keyword>
<evidence type="ECO:0000250" key="1"/>
<evidence type="ECO:0000255" key="2"/>
<evidence type="ECO:0000305" key="3"/>